<accession>Q1JE54</accession>
<comment type="function">
    <text evidence="1">Protein S19 forms a complex with S13 that binds strongly to the 16S ribosomal RNA.</text>
</comment>
<comment type="similarity">
    <text evidence="1">Belongs to the universal ribosomal protein uS19 family.</text>
</comment>
<comment type="sequence caution" evidence="2">
    <conflict type="erroneous initiation">
        <sequence resource="EMBL-CDS" id="ABF35104"/>
    </conflict>
</comment>
<feature type="chain" id="PRO_0000265442" description="Small ribosomal subunit protein uS19">
    <location>
        <begin position="1"/>
        <end position="92"/>
    </location>
</feature>
<evidence type="ECO:0000255" key="1">
    <source>
        <dbReference type="HAMAP-Rule" id="MF_00531"/>
    </source>
</evidence>
<evidence type="ECO:0000305" key="2"/>
<dbReference type="EMBL" id="CP000261">
    <property type="protein sequence ID" value="ABF35104.1"/>
    <property type="status" value="ALT_INIT"/>
    <property type="molecule type" value="Genomic_DNA"/>
</dbReference>
<dbReference type="SMR" id="Q1JE54"/>
<dbReference type="KEGG" id="spj:MGAS2096_Spy0052"/>
<dbReference type="HOGENOM" id="CLU_144911_0_0_9"/>
<dbReference type="GO" id="GO:0005737">
    <property type="term" value="C:cytoplasm"/>
    <property type="evidence" value="ECO:0007669"/>
    <property type="project" value="UniProtKB-ARBA"/>
</dbReference>
<dbReference type="GO" id="GO:0015935">
    <property type="term" value="C:small ribosomal subunit"/>
    <property type="evidence" value="ECO:0007669"/>
    <property type="project" value="InterPro"/>
</dbReference>
<dbReference type="GO" id="GO:0019843">
    <property type="term" value="F:rRNA binding"/>
    <property type="evidence" value="ECO:0007669"/>
    <property type="project" value="UniProtKB-UniRule"/>
</dbReference>
<dbReference type="GO" id="GO:0003735">
    <property type="term" value="F:structural constituent of ribosome"/>
    <property type="evidence" value="ECO:0007669"/>
    <property type="project" value="InterPro"/>
</dbReference>
<dbReference type="GO" id="GO:0000028">
    <property type="term" value="P:ribosomal small subunit assembly"/>
    <property type="evidence" value="ECO:0007669"/>
    <property type="project" value="TreeGrafter"/>
</dbReference>
<dbReference type="GO" id="GO:0006412">
    <property type="term" value="P:translation"/>
    <property type="evidence" value="ECO:0007669"/>
    <property type="project" value="UniProtKB-UniRule"/>
</dbReference>
<dbReference type="FunFam" id="3.30.860.10:FF:000001">
    <property type="entry name" value="30S ribosomal protein S19"/>
    <property type="match status" value="1"/>
</dbReference>
<dbReference type="Gene3D" id="3.30.860.10">
    <property type="entry name" value="30s Ribosomal Protein S19, Chain A"/>
    <property type="match status" value="1"/>
</dbReference>
<dbReference type="HAMAP" id="MF_00531">
    <property type="entry name" value="Ribosomal_uS19"/>
    <property type="match status" value="1"/>
</dbReference>
<dbReference type="InterPro" id="IPR002222">
    <property type="entry name" value="Ribosomal_uS19"/>
</dbReference>
<dbReference type="InterPro" id="IPR005732">
    <property type="entry name" value="Ribosomal_uS19_bac-type"/>
</dbReference>
<dbReference type="InterPro" id="IPR020934">
    <property type="entry name" value="Ribosomal_uS19_CS"/>
</dbReference>
<dbReference type="InterPro" id="IPR023575">
    <property type="entry name" value="Ribosomal_uS19_SF"/>
</dbReference>
<dbReference type="NCBIfam" id="TIGR01050">
    <property type="entry name" value="rpsS_bact"/>
    <property type="match status" value="1"/>
</dbReference>
<dbReference type="PANTHER" id="PTHR11880">
    <property type="entry name" value="RIBOSOMAL PROTEIN S19P FAMILY MEMBER"/>
    <property type="match status" value="1"/>
</dbReference>
<dbReference type="PANTHER" id="PTHR11880:SF8">
    <property type="entry name" value="SMALL RIBOSOMAL SUBUNIT PROTEIN US19M"/>
    <property type="match status" value="1"/>
</dbReference>
<dbReference type="Pfam" id="PF00203">
    <property type="entry name" value="Ribosomal_S19"/>
    <property type="match status" value="1"/>
</dbReference>
<dbReference type="PIRSF" id="PIRSF002144">
    <property type="entry name" value="Ribosomal_S19"/>
    <property type="match status" value="1"/>
</dbReference>
<dbReference type="PRINTS" id="PR00975">
    <property type="entry name" value="RIBOSOMALS19"/>
</dbReference>
<dbReference type="SUPFAM" id="SSF54570">
    <property type="entry name" value="Ribosomal protein S19"/>
    <property type="match status" value="1"/>
</dbReference>
<dbReference type="PROSITE" id="PS00323">
    <property type="entry name" value="RIBOSOMAL_S19"/>
    <property type="match status" value="1"/>
</dbReference>
<keyword id="KW-0687">Ribonucleoprotein</keyword>
<keyword id="KW-0689">Ribosomal protein</keyword>
<keyword id="KW-0694">RNA-binding</keyword>
<keyword id="KW-0699">rRNA-binding</keyword>
<proteinExistence type="inferred from homology"/>
<reference key="1">
    <citation type="journal article" date="2006" name="Proc. Natl. Acad. Sci. U.S.A.">
        <title>Molecular genetic anatomy of inter- and intraserotype variation in the human bacterial pathogen group A Streptococcus.</title>
        <authorList>
            <person name="Beres S.B."/>
            <person name="Richter E.W."/>
            <person name="Nagiec M.J."/>
            <person name="Sumby P."/>
            <person name="Porcella S.F."/>
            <person name="DeLeo F.R."/>
            <person name="Musser J.M."/>
        </authorList>
    </citation>
    <scope>NUCLEOTIDE SEQUENCE [LARGE SCALE GENOMIC DNA]</scope>
    <source>
        <strain>MGAS2096</strain>
    </source>
</reference>
<name>RS19_STRPB</name>
<sequence>MGRSLKKGPFVDEHLMKKVEAQANDEKKKVIKTWSRRSTIFPSFIGYTIAVYDGRKHVPVYIQEDMVGHKLGEFAPTRTYKGHAADDKKTRR</sequence>
<gene>
    <name evidence="1" type="primary">rpsS</name>
    <name type="ordered locus">MGAS2096_Spy0052</name>
</gene>
<protein>
    <recommendedName>
        <fullName evidence="1">Small ribosomal subunit protein uS19</fullName>
    </recommendedName>
    <alternativeName>
        <fullName evidence="2">30S ribosomal protein S19</fullName>
    </alternativeName>
</protein>
<organism>
    <name type="scientific">Streptococcus pyogenes serotype M12 (strain MGAS2096)</name>
    <dbReference type="NCBI Taxonomy" id="370553"/>
    <lineage>
        <taxon>Bacteria</taxon>
        <taxon>Bacillati</taxon>
        <taxon>Bacillota</taxon>
        <taxon>Bacilli</taxon>
        <taxon>Lactobacillales</taxon>
        <taxon>Streptococcaceae</taxon>
        <taxon>Streptococcus</taxon>
    </lineage>
</organism>